<proteinExistence type="evidence at protein level"/>
<feature type="signal peptide" evidence="7">
    <location>
        <begin position="1"/>
        <end position="21"/>
    </location>
</feature>
<feature type="chain" id="PRO_0000314797" description="Signal peptide peptidase-like 2C">
    <location>
        <begin position="22"/>
        <end position="684"/>
    </location>
</feature>
<feature type="topological domain" description="Lumenal" evidence="7">
    <location>
        <begin position="22"/>
        <end position="186"/>
    </location>
</feature>
<feature type="transmembrane region" description="Helical" evidence="4">
    <location>
        <begin position="187"/>
        <end position="207"/>
    </location>
</feature>
<feature type="topological domain" description="Cytoplasmic" evidence="4">
    <location>
        <begin position="208"/>
        <end position="253"/>
    </location>
</feature>
<feature type="transmembrane region" description="Helical" evidence="4">
    <location>
        <begin position="254"/>
        <end position="274"/>
    </location>
</feature>
<feature type="topological domain" description="Lumenal" evidence="4">
    <location>
        <begin position="275"/>
        <end position="276"/>
    </location>
</feature>
<feature type="transmembrane region" description="Helical" evidence="4">
    <location>
        <begin position="277"/>
        <end position="297"/>
    </location>
</feature>
<feature type="topological domain" description="Cytoplasmic" evidence="4">
    <location>
        <begin position="298"/>
        <end position="319"/>
    </location>
</feature>
<feature type="transmembrane region" description="Helical" evidence="4">
    <location>
        <begin position="320"/>
        <end position="340"/>
    </location>
</feature>
<feature type="topological domain" description="Lumenal" evidence="4">
    <location>
        <begin position="341"/>
        <end position="346"/>
    </location>
</feature>
<feature type="transmembrane region" description="Helical" evidence="4">
    <location>
        <begin position="347"/>
        <end position="365"/>
    </location>
</feature>
<feature type="topological domain" description="Cytoplasmic" evidence="4">
    <location>
        <begin position="366"/>
        <end position="376"/>
    </location>
</feature>
<feature type="transmembrane region" description="Helical" evidence="4">
    <location>
        <begin position="377"/>
        <end position="397"/>
    </location>
</feature>
<feature type="topological domain" description="Lumenal" evidence="7">
    <location>
        <begin position="398"/>
        <end position="439"/>
    </location>
</feature>
<feature type="transmembrane region" description="Helical" evidence="4">
    <location>
        <begin position="440"/>
        <end position="460"/>
    </location>
</feature>
<feature type="topological domain" description="Cytoplasmic" evidence="4">
    <location>
        <begin position="461"/>
        <end position="472"/>
    </location>
</feature>
<feature type="transmembrane region" description="Helical" evidence="4">
    <location>
        <begin position="473"/>
        <end position="493"/>
    </location>
</feature>
<feature type="topological domain" description="Lumenal" evidence="4">
    <location>
        <begin position="494"/>
        <end position="495"/>
    </location>
</feature>
<feature type="transmembrane region" description="Helical" evidence="4">
    <location>
        <begin position="496"/>
        <end position="516"/>
    </location>
</feature>
<feature type="topological domain" description="Cytoplasmic" evidence="7">
    <location>
        <begin position="517"/>
        <end position="684"/>
    </location>
</feature>
<feature type="domain" description="PA">
    <location>
        <begin position="83"/>
        <end position="163"/>
    </location>
</feature>
<feature type="region of interest" description="Disordered" evidence="5">
    <location>
        <begin position="216"/>
        <end position="242"/>
    </location>
</feature>
<feature type="region of interest" description="Disordered" evidence="5">
    <location>
        <begin position="548"/>
        <end position="614"/>
    </location>
</feature>
<feature type="short sequence motif" description="PAL">
    <location>
        <begin position="499"/>
        <end position="501"/>
    </location>
</feature>
<feature type="compositionally biased region" description="Low complexity" evidence="5">
    <location>
        <begin position="227"/>
        <end position="238"/>
    </location>
</feature>
<feature type="compositionally biased region" description="Polar residues" evidence="5">
    <location>
        <begin position="582"/>
        <end position="592"/>
    </location>
</feature>
<feature type="compositionally biased region" description="Basic and acidic residues" evidence="5">
    <location>
        <begin position="594"/>
        <end position="611"/>
    </location>
</feature>
<feature type="active site" evidence="3">
    <location>
        <position position="386"/>
    </location>
</feature>
<feature type="active site" evidence="3">
    <location>
        <position position="448"/>
    </location>
</feature>
<feature type="glycosylation site" description="N-linked (GlcNAc...) asparagine" evidence="15">
    <location>
        <position position="100"/>
    </location>
</feature>
<feature type="sequence variant" id="VAR_038048" description="In dbSNP:rs17763658.">
    <original>R</original>
    <variation>Q</variation>
    <location>
        <position position="123"/>
    </location>
</feature>
<feature type="sequence variant" id="VAR_038049" description="In dbSNP:rs242944." evidence="6 8">
    <original>R</original>
    <variation>H</variation>
    <location>
        <position position="303"/>
    </location>
</feature>
<feature type="sequence variant" id="VAR_038050" description="In dbSNP:rs12185233.">
    <original>R</original>
    <variation>P</variation>
    <location>
        <position position="461"/>
    </location>
</feature>
<feature type="sequence variant" id="VAR_038051" description="In dbSNP:rs12185268.">
    <original>I</original>
    <variation>V</variation>
    <location>
        <position position="471"/>
    </location>
</feature>
<feature type="sequence variant" id="VAR_038052" description="In dbSNP:rs12373123.">
    <original>S</original>
    <variation>P</variation>
    <location>
        <position position="601"/>
    </location>
</feature>
<feature type="sequence variant" id="VAR_038053" description="In dbSNP:rs12373139.">
    <original>G</original>
    <variation>R</variation>
    <location>
        <position position="620"/>
    </location>
</feature>
<feature type="sequence variant" id="VAR_060590" description="In dbSNP:rs17852270." evidence="8">
    <original>M</original>
    <variation>V</variation>
    <location>
        <position position="626"/>
    </location>
</feature>
<feature type="sequence variant" id="VAR_038054" description="In dbSNP:rs12373142.">
    <original>P</original>
    <variation>R</variation>
    <location>
        <position position="643"/>
    </location>
</feature>
<feature type="sequence variant" id="VAR_057147" description="In dbSNP:rs16940694.">
    <original>T</original>
    <variation>I</variation>
    <location>
        <position position="659"/>
    </location>
</feature>
<feature type="mutagenesis site" description="Loss of aspartyl protease activity." evidence="11">
    <original>D</original>
    <variation>A</variation>
    <location>
        <position position="448"/>
    </location>
</feature>
<dbReference type="EC" id="3.4.23.-" evidence="11"/>
<dbReference type="EMBL" id="AY169316">
    <property type="protein sequence ID" value="AAO12541.1"/>
    <property type="molecule type" value="Genomic_DNA"/>
</dbReference>
<dbReference type="EMBL" id="AC003662">
    <property type="status" value="NOT_ANNOTATED_CDS"/>
    <property type="molecule type" value="Genomic_DNA"/>
</dbReference>
<dbReference type="EMBL" id="AC217770">
    <property type="status" value="NOT_ANNOTATED_CDS"/>
    <property type="molecule type" value="Genomic_DNA"/>
</dbReference>
<dbReference type="EMBL" id="AC217771">
    <property type="status" value="NOT_ANNOTATED_CDS"/>
    <property type="molecule type" value="Genomic_DNA"/>
</dbReference>
<dbReference type="EMBL" id="BC022041">
    <property type="protein sequence ID" value="AAH22041.2"/>
    <property type="molecule type" value="mRNA"/>
</dbReference>
<dbReference type="EMBL" id="BC025401">
    <property type="protein sequence ID" value="AAH25401.1"/>
    <property type="molecule type" value="mRNA"/>
</dbReference>
<dbReference type="CCDS" id="CCDS32673.1"/>
<dbReference type="RefSeq" id="NP_787078.2">
    <property type="nucleotide sequence ID" value="NM_175882.3"/>
</dbReference>
<dbReference type="BioGRID" id="127824">
    <property type="interactions" value="4"/>
</dbReference>
<dbReference type="FunCoup" id="Q8IUH8">
    <property type="interactions" value="29"/>
</dbReference>
<dbReference type="IntAct" id="Q8IUH8">
    <property type="interactions" value="3"/>
</dbReference>
<dbReference type="STRING" id="9606.ENSP00000332488"/>
<dbReference type="MEROPS" id="A22.006"/>
<dbReference type="GlyCosmos" id="Q8IUH8">
    <property type="glycosylation" value="1 site, No reported glycans"/>
</dbReference>
<dbReference type="GlyGen" id="Q8IUH8">
    <property type="glycosylation" value="2 sites"/>
</dbReference>
<dbReference type="iPTMnet" id="Q8IUH8"/>
<dbReference type="PhosphoSitePlus" id="Q8IUH8"/>
<dbReference type="BioMuta" id="SPPL2C"/>
<dbReference type="DMDM" id="269849676"/>
<dbReference type="MassIVE" id="Q8IUH8"/>
<dbReference type="PaxDb" id="9606-ENSP00000332488"/>
<dbReference type="PeptideAtlas" id="Q8IUH8"/>
<dbReference type="ProteomicsDB" id="70575"/>
<dbReference type="Antibodypedia" id="17655">
    <property type="antibodies" value="42 antibodies from 16 providers"/>
</dbReference>
<dbReference type="DNASU" id="162540"/>
<dbReference type="Ensembl" id="ENST00000329196.7">
    <property type="protein sequence ID" value="ENSP00000332488.5"/>
    <property type="gene ID" value="ENSG00000185294.7"/>
</dbReference>
<dbReference type="GeneID" id="162540"/>
<dbReference type="KEGG" id="hsa:162540"/>
<dbReference type="MANE-Select" id="ENST00000329196.7">
    <property type="protein sequence ID" value="ENSP00000332488.5"/>
    <property type="RefSeq nucleotide sequence ID" value="NM_175882.3"/>
    <property type="RefSeq protein sequence ID" value="NP_787078.2"/>
</dbReference>
<dbReference type="UCSC" id="uc010wka.3">
    <property type="organism name" value="human"/>
</dbReference>
<dbReference type="AGR" id="HGNC:28902"/>
<dbReference type="CTD" id="162540"/>
<dbReference type="DisGeNET" id="162540"/>
<dbReference type="GeneCards" id="SPPL2C"/>
<dbReference type="HGNC" id="HGNC:28902">
    <property type="gene designation" value="SPPL2C"/>
</dbReference>
<dbReference type="HPA" id="ENSG00000185294">
    <property type="expression patterns" value="Tissue enriched (testis)"/>
</dbReference>
<dbReference type="MIM" id="608284">
    <property type="type" value="gene"/>
</dbReference>
<dbReference type="neXtProt" id="NX_Q8IUH8"/>
<dbReference type="OpenTargets" id="ENSG00000185294"/>
<dbReference type="VEuPathDB" id="HostDB:ENSG00000185294"/>
<dbReference type="eggNOG" id="KOG2442">
    <property type="taxonomic scope" value="Eukaryota"/>
</dbReference>
<dbReference type="GeneTree" id="ENSGT00940000163306"/>
<dbReference type="HOGENOM" id="CLU_023799_2_1_1"/>
<dbReference type="InParanoid" id="Q8IUH8"/>
<dbReference type="OMA" id="KDYCVLF"/>
<dbReference type="OrthoDB" id="29661at2759"/>
<dbReference type="PAN-GO" id="Q8IUH8">
    <property type="GO annotations" value="6 GO annotations based on evolutionary models"/>
</dbReference>
<dbReference type="PhylomeDB" id="Q8IUH8"/>
<dbReference type="TreeFam" id="TF319186"/>
<dbReference type="BRENDA" id="3.4.23.B24">
    <property type="organism ID" value="2681"/>
</dbReference>
<dbReference type="PathwayCommons" id="Q8IUH8"/>
<dbReference type="SignaLink" id="Q8IUH8"/>
<dbReference type="BioGRID-ORCS" id="162540">
    <property type="hits" value="17 hits in 1137 CRISPR screens"/>
</dbReference>
<dbReference type="GenomeRNAi" id="162540"/>
<dbReference type="Pharos" id="Q8IUH8">
    <property type="development level" value="Tbio"/>
</dbReference>
<dbReference type="PRO" id="PR:Q8IUH8"/>
<dbReference type="Proteomes" id="UP000005640">
    <property type="component" value="Chromosome 17"/>
</dbReference>
<dbReference type="RNAct" id="Q8IUH8">
    <property type="molecule type" value="protein"/>
</dbReference>
<dbReference type="Bgee" id="ENSG00000185294">
    <property type="expression patterns" value="Expressed in right testis and 27 other cell types or tissues"/>
</dbReference>
<dbReference type="GO" id="GO:0098554">
    <property type="term" value="C:cytoplasmic side of endoplasmic reticulum membrane"/>
    <property type="evidence" value="ECO:0000314"/>
    <property type="project" value="UniProtKB"/>
</dbReference>
<dbReference type="GO" id="GO:0005789">
    <property type="term" value="C:endoplasmic reticulum membrane"/>
    <property type="evidence" value="ECO:0000314"/>
    <property type="project" value="UniProtKB"/>
</dbReference>
<dbReference type="GO" id="GO:0030660">
    <property type="term" value="C:Golgi-associated vesicle membrane"/>
    <property type="evidence" value="ECO:0000318"/>
    <property type="project" value="GO_Central"/>
</dbReference>
<dbReference type="GO" id="GO:0098553">
    <property type="term" value="C:lumenal side of endoplasmic reticulum membrane"/>
    <property type="evidence" value="ECO:0000314"/>
    <property type="project" value="UniProtKB"/>
</dbReference>
<dbReference type="GO" id="GO:0005765">
    <property type="term" value="C:lysosomal membrane"/>
    <property type="evidence" value="ECO:0000318"/>
    <property type="project" value="GO_Central"/>
</dbReference>
<dbReference type="GO" id="GO:0042500">
    <property type="term" value="F:aspartic endopeptidase activity, intramembrane cleaving"/>
    <property type="evidence" value="ECO:0000250"/>
    <property type="project" value="UniProtKB"/>
</dbReference>
<dbReference type="GO" id="GO:0060090">
    <property type="term" value="F:molecular adaptor activity"/>
    <property type="evidence" value="ECO:0007669"/>
    <property type="project" value="Ensembl"/>
</dbReference>
<dbReference type="GO" id="GO:0042803">
    <property type="term" value="F:protein homodimerization activity"/>
    <property type="evidence" value="ECO:0000314"/>
    <property type="project" value="UniProtKB"/>
</dbReference>
<dbReference type="GO" id="GO:0001675">
    <property type="term" value="P:acrosome assembly"/>
    <property type="evidence" value="ECO:0000250"/>
    <property type="project" value="UniProtKB"/>
</dbReference>
<dbReference type="GO" id="GO:0007342">
    <property type="term" value="P:fusion of sperm to egg plasma membrane involved in single fertilization"/>
    <property type="evidence" value="ECO:0000250"/>
    <property type="project" value="UniProtKB"/>
</dbReference>
<dbReference type="GO" id="GO:0006874">
    <property type="term" value="P:intracellular calcium ion homeostasis"/>
    <property type="evidence" value="ECO:0000250"/>
    <property type="project" value="UniProtKB"/>
</dbReference>
<dbReference type="GO" id="GO:0033619">
    <property type="term" value="P:membrane protein proteolysis"/>
    <property type="evidence" value="ECO:0000318"/>
    <property type="project" value="GO_Central"/>
</dbReference>
<dbReference type="GO" id="GO:0050821">
    <property type="term" value="P:protein stabilization"/>
    <property type="evidence" value="ECO:0007669"/>
    <property type="project" value="Ensembl"/>
</dbReference>
<dbReference type="GO" id="GO:0035036">
    <property type="term" value="P:sperm-egg recognition"/>
    <property type="evidence" value="ECO:0000250"/>
    <property type="project" value="UniProtKB"/>
</dbReference>
<dbReference type="CDD" id="cd02129">
    <property type="entry name" value="PA_hSPPL_like"/>
    <property type="match status" value="1"/>
</dbReference>
<dbReference type="FunFam" id="3.50.30.30:FF:000035">
    <property type="entry name" value="Signal peptide peptidase like 2C"/>
    <property type="match status" value="1"/>
</dbReference>
<dbReference type="Gene3D" id="3.50.30.30">
    <property type="match status" value="1"/>
</dbReference>
<dbReference type="InterPro" id="IPR003137">
    <property type="entry name" value="PA_domain"/>
</dbReference>
<dbReference type="InterPro" id="IPR007369">
    <property type="entry name" value="Peptidase_A22B_SPP"/>
</dbReference>
<dbReference type="InterPro" id="IPR006639">
    <property type="entry name" value="Preselin/SPP"/>
</dbReference>
<dbReference type="PANTHER" id="PTHR12174">
    <property type="entry name" value="SIGNAL PEPTIDE PEPTIDASE"/>
    <property type="match status" value="1"/>
</dbReference>
<dbReference type="PANTHER" id="PTHR12174:SF38">
    <property type="entry name" value="SIGNAL PEPTIDE PEPTIDASE-LIKE 2C"/>
    <property type="match status" value="1"/>
</dbReference>
<dbReference type="Pfam" id="PF02225">
    <property type="entry name" value="PA"/>
    <property type="match status" value="1"/>
</dbReference>
<dbReference type="Pfam" id="PF04258">
    <property type="entry name" value="Peptidase_A22B"/>
    <property type="match status" value="1"/>
</dbReference>
<dbReference type="SMART" id="SM00730">
    <property type="entry name" value="PSN"/>
    <property type="match status" value="1"/>
</dbReference>
<organism>
    <name type="scientific">Homo sapiens</name>
    <name type="common">Human</name>
    <dbReference type="NCBI Taxonomy" id="9606"/>
    <lineage>
        <taxon>Eukaryota</taxon>
        <taxon>Metazoa</taxon>
        <taxon>Chordata</taxon>
        <taxon>Craniata</taxon>
        <taxon>Vertebrata</taxon>
        <taxon>Euteleostomi</taxon>
        <taxon>Mammalia</taxon>
        <taxon>Eutheria</taxon>
        <taxon>Euarchontoglires</taxon>
        <taxon>Primates</taxon>
        <taxon>Haplorrhini</taxon>
        <taxon>Catarrhini</taxon>
        <taxon>Hominidae</taxon>
        <taxon>Homo</taxon>
    </lineage>
</organism>
<evidence type="ECO:0000250" key="1">
    <source>
        <dbReference type="UniProtKB" id="A2A6C4"/>
    </source>
</evidence>
<evidence type="ECO:0000250" key="2">
    <source>
        <dbReference type="UniProtKB" id="P49768"/>
    </source>
</evidence>
<evidence type="ECO:0000250" key="3">
    <source>
        <dbReference type="UniProtKB" id="P49810"/>
    </source>
</evidence>
<evidence type="ECO:0000255" key="4"/>
<evidence type="ECO:0000256" key="5">
    <source>
        <dbReference type="SAM" id="MobiDB-lite"/>
    </source>
</evidence>
<evidence type="ECO:0000269" key="6">
    <source>
    </source>
</evidence>
<evidence type="ECO:0000269" key="7">
    <source>
    </source>
</evidence>
<evidence type="ECO:0000269" key="8">
    <source>
    </source>
</evidence>
<evidence type="ECO:0000269" key="9">
    <source>
    </source>
</evidence>
<evidence type="ECO:0000269" key="10">
    <source>
    </source>
</evidence>
<evidence type="ECO:0000269" key="11">
    <source>
    </source>
</evidence>
<evidence type="ECO:0000303" key="12">
    <source>
    </source>
</evidence>
<evidence type="ECO:0000303" key="13">
    <source>
    </source>
</evidence>
<evidence type="ECO:0000305" key="14"/>
<evidence type="ECO:0000305" key="15">
    <source>
    </source>
</evidence>
<evidence type="ECO:0000312" key="16">
    <source>
        <dbReference type="HGNC" id="HGNC:28902"/>
    </source>
</evidence>
<name>SPP2C_HUMAN</name>
<accession>Q8IUH8</accession>
<accession>Q8TC67</accession>
<accession>Q8WVZ6</accession>
<gene>
    <name evidence="16" type="primary">SPPL2C</name>
    <name evidence="12" type="synonym">IMP5</name>
</gene>
<sequence length="684" mass="74503">MACLGFLLPVGFLLLISTVAGGKYGVAHVVSENWSKDYCILFSSDYITLPRDLHHAPLLPLYDGTKAPWCPGEDSPHQAQLRSPSQRPLRQTTAMVMRGNCSFHTKGWLAQGQGAHGLLIVSRVSDQQCSDTTLAPQDPRQPLADLTIPVAMLHYADMLDILSHTRGEAVVRVAMYAPPEPIIDYNMLVIFILAVGTVAAGGYWAGLTEANRLQRRRARRGGGSGGHHQLQEAAAAEGAQKEDNEDIPVDFTPAMTGVVVTLSCSLMLLLYFFYDHFVYVTIGIFGLGAGIGLYSCLSPLVCRLSLRQYQRPPHSLWASLPLPLLLLASLCATVIIFWVAYRNEDRWAWLLQDTLGISYCLFVLHRVRLPTLKNCSSFLLALLAFDVFFVFVTPFFTKTGESIMAQVALGPAESSSHERLPMVLKVPRLRVSALTLCSQPFSILGFGDIVVPGFLVAYCCRFDVQVCSRQIYFVACTVAYAVGLLVTFMAMVLMQMGQPALLYLVSSTLLTSLAVAACRQELSLFWTGQGRAKMCGLGCAPSAGSRQKQEGAADAHTASTLERGTSRGAGDLDSNPGEDTTEIVTISENEATNPEDRSDSSEGWSDAHLDPNELPFIPPGASEELMPLMPMAMLIPLMPLMPPPSELGHVHAQAQAHETGLPWAGLHKRKGLKVRKSMSTQAPL</sequence>
<reference key="1">
    <citation type="journal article" date="2002" name="Biochemistry (Mosc.)">
        <title>Novel class of polytopic proteins with domains associated with putative protease activity.</title>
        <authorList>
            <person name="Grigorenko A.P."/>
            <person name="Moliaka Y.K."/>
            <person name="Korovaitseva G.I."/>
            <person name="Rogaev E.I."/>
        </authorList>
    </citation>
    <scope>NUCLEOTIDE SEQUENCE [GENOMIC DNA]</scope>
    <scope>VARIANT HIS-303</scope>
</reference>
<reference key="2">
    <citation type="journal article" date="2006" name="Nature">
        <title>DNA sequence of human chromosome 17 and analysis of rearrangement in the human lineage.</title>
        <authorList>
            <person name="Zody M.C."/>
            <person name="Garber M."/>
            <person name="Adams D.J."/>
            <person name="Sharpe T."/>
            <person name="Harrow J."/>
            <person name="Lupski J.R."/>
            <person name="Nicholson C."/>
            <person name="Searle S.M."/>
            <person name="Wilming L."/>
            <person name="Young S.K."/>
            <person name="Abouelleil A."/>
            <person name="Allen N.R."/>
            <person name="Bi W."/>
            <person name="Bloom T."/>
            <person name="Borowsky M.L."/>
            <person name="Bugalter B.E."/>
            <person name="Butler J."/>
            <person name="Chang J.L."/>
            <person name="Chen C.-K."/>
            <person name="Cook A."/>
            <person name="Corum B."/>
            <person name="Cuomo C.A."/>
            <person name="de Jong P.J."/>
            <person name="DeCaprio D."/>
            <person name="Dewar K."/>
            <person name="FitzGerald M."/>
            <person name="Gilbert J."/>
            <person name="Gibson R."/>
            <person name="Gnerre S."/>
            <person name="Goldstein S."/>
            <person name="Grafham D.V."/>
            <person name="Grocock R."/>
            <person name="Hafez N."/>
            <person name="Hagopian D.S."/>
            <person name="Hart E."/>
            <person name="Norman C.H."/>
            <person name="Humphray S."/>
            <person name="Jaffe D.B."/>
            <person name="Jones M."/>
            <person name="Kamal M."/>
            <person name="Khodiyar V.K."/>
            <person name="LaButti K."/>
            <person name="Laird G."/>
            <person name="Lehoczky J."/>
            <person name="Liu X."/>
            <person name="Lokyitsang T."/>
            <person name="Loveland J."/>
            <person name="Lui A."/>
            <person name="Macdonald P."/>
            <person name="Major J.E."/>
            <person name="Matthews L."/>
            <person name="Mauceli E."/>
            <person name="McCarroll S.A."/>
            <person name="Mihalev A.H."/>
            <person name="Mudge J."/>
            <person name="Nguyen C."/>
            <person name="Nicol R."/>
            <person name="O'Leary S.B."/>
            <person name="Osoegawa K."/>
            <person name="Schwartz D.C."/>
            <person name="Shaw-Smith C."/>
            <person name="Stankiewicz P."/>
            <person name="Steward C."/>
            <person name="Swarbreck D."/>
            <person name="Venkataraman V."/>
            <person name="Whittaker C.A."/>
            <person name="Yang X."/>
            <person name="Zimmer A.R."/>
            <person name="Bradley A."/>
            <person name="Hubbard T."/>
            <person name="Birren B.W."/>
            <person name="Rogers J."/>
            <person name="Lander E.S."/>
            <person name="Nusbaum C."/>
        </authorList>
    </citation>
    <scope>NUCLEOTIDE SEQUENCE [LARGE SCALE GENOMIC DNA]</scope>
</reference>
<reference key="3">
    <citation type="journal article" date="2004" name="Genome Res.">
        <title>The status, quality, and expansion of the NIH full-length cDNA project: the Mammalian Gene Collection (MGC).</title>
        <authorList>
            <consortium name="The MGC Project Team"/>
        </authorList>
    </citation>
    <scope>NUCLEOTIDE SEQUENCE [LARGE SCALE MRNA]</scope>
    <scope>VARIANTS HIS-303 AND VAL-626</scope>
    <source>
        <tissue>Testis</tissue>
    </source>
</reference>
<reference key="4">
    <citation type="journal article" date="2004" name="J. Biol. Chem.">
        <title>Consensus analysis of signal peptide peptidase and homologous human aspartic proteases reveals opposite topology of catalytic domains compared with presenilins.</title>
        <authorList>
            <person name="Friedmann E."/>
            <person name="Lemberg M.K."/>
            <person name="Weihofen A."/>
            <person name="Dev K.K."/>
            <person name="Dengler U."/>
            <person name="Rovelli G."/>
            <person name="Martoglio B."/>
        </authorList>
    </citation>
    <scope>GLYCOSYLATION</scope>
    <scope>TOPOLOGY</scope>
    <scope>SUBCELLULAR LOCATION</scope>
</reference>
<reference key="5">
    <citation type="journal article" date="2006" name="Nat. Cell Biol.">
        <title>SPPL2a and SPPL2b promote intramembrane proteolysis of TNFalpha in activated dendritic cells to trigger IL-12 production.</title>
        <authorList>
            <person name="Friedmann E."/>
            <person name="Hauben E."/>
            <person name="Maylandt K."/>
            <person name="Schleeger S."/>
            <person name="Vreugde S."/>
            <person name="Lichtenthaler S.F."/>
            <person name="Kuhn P.H."/>
            <person name="Stauffer D."/>
            <person name="Rovelli G."/>
            <person name="Martoglio B."/>
        </authorList>
    </citation>
    <scope>SUBCELLULAR LOCATION</scope>
</reference>
<reference key="6">
    <citation type="journal article" date="2019" name="EMBO Rep.">
        <title>The intramembrane protease SPPL2c promotes male germ cell development by cleaving phospholamban.</title>
        <authorList>
            <person name="Niemeyer J."/>
            <person name="Mentrup T."/>
            <person name="Heidasch R."/>
            <person name="Mueller S.A."/>
            <person name="Biswas U."/>
            <person name="Meyer R."/>
            <person name="Papadopoulou A.A."/>
            <person name="Dederer V."/>
            <person name="Haug-Kroeper M."/>
            <person name="Adamski V."/>
            <person name="Luellmann-Rauch R."/>
            <person name="Bergmann M."/>
            <person name="Mayerhofer A."/>
            <person name="Saftig P."/>
            <person name="Wennemuth G."/>
            <person name="Jessberger R."/>
            <person name="Fluhrer R."/>
            <person name="Lichtenthaler S.F."/>
            <person name="Lemberg M.K."/>
            <person name="Schroeder B."/>
        </authorList>
    </citation>
    <scope>TISSUE SPECIFICITY</scope>
    <scope>SUBCELLULAR LOCATION</scope>
</reference>
<reference key="7">
    <citation type="journal article" date="2019" name="EMBO Rep.">
        <title>Signal peptide peptidase-like 2c impairs vesicular transport and cleaves SNARE proteins.</title>
        <authorList>
            <person name="Papadopoulou A.A."/>
            <person name="Mueller S.A."/>
            <person name="Mentrup T."/>
            <person name="Shmueli M.D."/>
            <person name="Niemeyer J."/>
            <person name="Haug-Kroeper M."/>
            <person name="von Blume J."/>
            <person name="Mayerhofer A."/>
            <person name="Feederle R."/>
            <person name="Schroeder B."/>
            <person name="Lichtenthaler S.F."/>
            <person name="Fluhrer R."/>
        </authorList>
    </citation>
    <scope>FUNCTION</scope>
    <scope>SUBCELLULAR LOCATION</scope>
    <scope>MUTAGENESIS OF ASP-448</scope>
    <scope>TISSUE SPECIFICITY</scope>
</reference>
<protein>
    <recommendedName>
        <fullName evidence="13">Signal peptide peptidase-like 2C</fullName>
        <shortName evidence="13">SPP-like 2C</shortName>
        <shortName evidence="13">SPPL2c</shortName>
        <ecNumber evidence="11">3.4.23.-</ecNumber>
    </recommendedName>
    <alternativeName>
        <fullName evidence="12">Intramembrane protease 5</fullName>
        <shortName evidence="12">IMP-5</shortName>
    </alternativeName>
</protein>
<comment type="function">
    <text evidence="1 11">Sperm-specific intramembrane-cleaving aspartic protease (I-CLiP) that cleaves distinct tail-anchored proteins and SNARE proteins (PubMed:30733281). In elongated spermatids, modulates intracellular Ca(2+) homeostasis by controlling PLN abundance through proteolytic cleavage (By similarity). During spermatogenesis, processes SNARE proteins and impacts vesicular trafficking which supports compartmental reorganization in maturating spermatids and may play a role in formation of the acrosome (PubMed:30733281).</text>
</comment>
<comment type="function">
    <text evidence="1">In round spermatids, acts as a scaffold protein supporting FREY1 in IZUMO1 recruitment at the endoplasmic reticulum membrane and coordination of IZUMO1 complex assembly. Stabilizes FREY1 at the endoplasmic reticulum membrane through interaction. May recruit IZUMO1 interaction partners.</text>
</comment>
<comment type="subunit">
    <text evidence="1">Interacts (via active sites) with FREY; the interaction stabilizes FREY1 protein and inhibits SPPL2C proteolytic activity.</text>
</comment>
<comment type="interaction">
    <interactant intactId="EBI-14064968">
        <id>Q8IUH8</id>
    </interactant>
    <interactant intactId="EBI-3867333">
        <id>A8MQ03</id>
        <label>CYSRT1</label>
    </interactant>
    <organismsDiffer>false</organismsDiffer>
    <experiments>3</experiments>
</comment>
<comment type="interaction">
    <interactant intactId="EBI-14064968">
        <id>Q8IUH8</id>
    </interactant>
    <interactant intactId="EBI-22310682">
        <id>P0DPK4</id>
        <label>NOTCH2NLC</label>
    </interactant>
    <organismsDiffer>false</organismsDiffer>
    <experiments>3</experiments>
</comment>
<comment type="subcellular location">
    <subcellularLocation>
        <location evidence="9 10 11">Endoplasmic reticulum membrane</location>
        <topology evidence="4">Multi-pass membrane protein</topology>
        <orientation evidence="7 9">Lumenal side</orientation>
    </subcellularLocation>
</comment>
<comment type="tissue specificity">
    <text evidence="11">Highly expressed in testis where it is primarily localised in spermatids (at protein level).</text>
</comment>
<comment type="domain">
    <text evidence="2">The PAL motif is required for normal active site conformation. The catalytic domains embedded in the membrane are in the opposite orientation to that of the presenilin protein family; therefore, it is predicted to cleave type II-oriented substrate peptides like the prototypic protease SPP.</text>
</comment>
<comment type="PTM">
    <text evidence="7">Glycosylated.</text>
</comment>
<comment type="similarity">
    <text evidence="14">Belongs to the peptidase A22B family.</text>
</comment>
<keyword id="KW-0256">Endoplasmic reticulum</keyword>
<keyword id="KW-0325">Glycoprotein</keyword>
<keyword id="KW-0378">Hydrolase</keyword>
<keyword id="KW-0472">Membrane</keyword>
<keyword id="KW-0645">Protease</keyword>
<keyword id="KW-1267">Proteomics identification</keyword>
<keyword id="KW-1185">Reference proteome</keyword>
<keyword id="KW-0732">Signal</keyword>
<keyword id="KW-0812">Transmembrane</keyword>
<keyword id="KW-1133">Transmembrane helix</keyword>